<comment type="function">
    <text evidence="1">Required for formate dehydrogenase (FDH) activity. Acts as a sulfur carrier protein that transfers sulfur from IscS to the molybdenum cofactor prior to its insertion into FDH.</text>
</comment>
<comment type="subcellular location">
    <subcellularLocation>
        <location evidence="1">Cytoplasm</location>
    </subcellularLocation>
</comment>
<comment type="similarity">
    <text evidence="1">Belongs to the FdhD family.</text>
</comment>
<name>FDHD_HAEI8</name>
<sequence>MQCWIRQTINFFRKTKNTEKLTALLQQKEDILAVEMPVSLVYNGISHAVMMCSPNNLEDFALGFSITEGIIDKPEDIYGIDVVEVCNGIEVQIELSSRKFMALKEHRRNLTGRTGCGICGTEQLNQVYKTFPKLDCTFQFDLNLLDSCLIDLQKNQLLGCKTGATHACAFFDLYGNMLAIYEDVGRHVALDKLLGWHAKSGKPRGFILASSRASYEMVQKTVACGVEMLVTISAATDLAVTMAEKHNLTLIGFAREGKGNIYSGHQRLHN</sequence>
<dbReference type="EMBL" id="CP000057">
    <property type="protein sequence ID" value="AAX87008.1"/>
    <property type="molecule type" value="Genomic_DNA"/>
</dbReference>
<dbReference type="RefSeq" id="WP_011271776.1">
    <property type="nucleotide sequence ID" value="NC_007146.2"/>
</dbReference>
<dbReference type="SMR" id="Q4QPN9"/>
<dbReference type="GeneID" id="93220761"/>
<dbReference type="KEGG" id="hit:NTHI0006"/>
<dbReference type="HOGENOM" id="CLU_056887_2_0_6"/>
<dbReference type="Proteomes" id="UP000002525">
    <property type="component" value="Chromosome"/>
</dbReference>
<dbReference type="GO" id="GO:0005737">
    <property type="term" value="C:cytoplasm"/>
    <property type="evidence" value="ECO:0007669"/>
    <property type="project" value="UniProtKB-SubCell"/>
</dbReference>
<dbReference type="GO" id="GO:0097163">
    <property type="term" value="F:sulfur carrier activity"/>
    <property type="evidence" value="ECO:0007669"/>
    <property type="project" value="UniProtKB-UniRule"/>
</dbReference>
<dbReference type="GO" id="GO:0016783">
    <property type="term" value="F:sulfurtransferase activity"/>
    <property type="evidence" value="ECO:0007669"/>
    <property type="project" value="InterPro"/>
</dbReference>
<dbReference type="GO" id="GO:0006777">
    <property type="term" value="P:Mo-molybdopterin cofactor biosynthetic process"/>
    <property type="evidence" value="ECO:0007669"/>
    <property type="project" value="UniProtKB-UniRule"/>
</dbReference>
<dbReference type="Gene3D" id="3.10.20.10">
    <property type="match status" value="1"/>
</dbReference>
<dbReference type="Gene3D" id="3.40.140.10">
    <property type="entry name" value="Cytidine Deaminase, domain 2"/>
    <property type="match status" value="1"/>
</dbReference>
<dbReference type="HAMAP" id="MF_00187">
    <property type="entry name" value="FdhD"/>
    <property type="match status" value="1"/>
</dbReference>
<dbReference type="InterPro" id="IPR016193">
    <property type="entry name" value="Cytidine_deaminase-like"/>
</dbReference>
<dbReference type="InterPro" id="IPR003786">
    <property type="entry name" value="FdhD"/>
</dbReference>
<dbReference type="NCBIfam" id="TIGR00129">
    <property type="entry name" value="fdhD_narQ"/>
    <property type="match status" value="1"/>
</dbReference>
<dbReference type="PANTHER" id="PTHR30592">
    <property type="entry name" value="FORMATE DEHYDROGENASE"/>
    <property type="match status" value="1"/>
</dbReference>
<dbReference type="PANTHER" id="PTHR30592:SF1">
    <property type="entry name" value="SULFUR CARRIER PROTEIN FDHD"/>
    <property type="match status" value="1"/>
</dbReference>
<dbReference type="Pfam" id="PF02634">
    <property type="entry name" value="FdhD-NarQ"/>
    <property type="match status" value="1"/>
</dbReference>
<dbReference type="PIRSF" id="PIRSF015626">
    <property type="entry name" value="FdhD"/>
    <property type="match status" value="1"/>
</dbReference>
<dbReference type="SUPFAM" id="SSF53927">
    <property type="entry name" value="Cytidine deaminase-like"/>
    <property type="match status" value="1"/>
</dbReference>
<reference key="1">
    <citation type="journal article" date="2005" name="J. Bacteriol.">
        <title>Genomic sequence of an otitis media isolate of nontypeable Haemophilus influenzae: comparative study with H. influenzae serotype d, strain KW20.</title>
        <authorList>
            <person name="Harrison A."/>
            <person name="Dyer D.W."/>
            <person name="Gillaspy A."/>
            <person name="Ray W.C."/>
            <person name="Mungur R."/>
            <person name="Carson M.B."/>
            <person name="Zhong H."/>
            <person name="Gipson J."/>
            <person name="Gipson M."/>
            <person name="Johnson L.S."/>
            <person name="Lewis L."/>
            <person name="Bakaletz L.O."/>
            <person name="Munson R.S. Jr."/>
        </authorList>
    </citation>
    <scope>NUCLEOTIDE SEQUENCE [LARGE SCALE GENOMIC DNA]</scope>
    <source>
        <strain>86-028NP</strain>
    </source>
</reference>
<keyword id="KW-0963">Cytoplasm</keyword>
<keyword id="KW-0501">Molybdenum cofactor biosynthesis</keyword>
<feature type="chain" id="PRO_0000152905" description="Sulfur carrier protein FdhD">
    <location>
        <begin position="1"/>
        <end position="270"/>
    </location>
</feature>
<feature type="active site" description="Cysteine persulfide intermediate" evidence="1">
    <location>
        <position position="116"/>
    </location>
</feature>
<feature type="binding site" evidence="1">
    <location>
        <begin position="253"/>
        <end position="258"/>
    </location>
    <ligand>
        <name>Mo-bis(molybdopterin guanine dinucleotide)</name>
        <dbReference type="ChEBI" id="CHEBI:60539"/>
    </ligand>
</feature>
<gene>
    <name evidence="1" type="primary">fdhD</name>
    <name type="ordered locus">NTHI0006</name>
</gene>
<proteinExistence type="inferred from homology"/>
<organism>
    <name type="scientific">Haemophilus influenzae (strain 86-028NP)</name>
    <dbReference type="NCBI Taxonomy" id="281310"/>
    <lineage>
        <taxon>Bacteria</taxon>
        <taxon>Pseudomonadati</taxon>
        <taxon>Pseudomonadota</taxon>
        <taxon>Gammaproteobacteria</taxon>
        <taxon>Pasteurellales</taxon>
        <taxon>Pasteurellaceae</taxon>
        <taxon>Haemophilus</taxon>
    </lineage>
</organism>
<evidence type="ECO:0000255" key="1">
    <source>
        <dbReference type="HAMAP-Rule" id="MF_00187"/>
    </source>
</evidence>
<accession>Q4QPN9</accession>
<protein>
    <recommendedName>
        <fullName evidence="1">Sulfur carrier protein FdhD</fullName>
    </recommendedName>
</protein>